<comment type="function">
    <text evidence="1">Catalyzes the conversion of lactate to pyruvate.</text>
</comment>
<comment type="catalytic activity">
    <reaction evidence="1">
        <text>(S)-lactate + NAD(+) = pyruvate + NADH + H(+)</text>
        <dbReference type="Rhea" id="RHEA:23444"/>
        <dbReference type="ChEBI" id="CHEBI:15361"/>
        <dbReference type="ChEBI" id="CHEBI:15378"/>
        <dbReference type="ChEBI" id="CHEBI:16651"/>
        <dbReference type="ChEBI" id="CHEBI:57540"/>
        <dbReference type="ChEBI" id="CHEBI:57945"/>
        <dbReference type="EC" id="1.1.1.27"/>
    </reaction>
</comment>
<comment type="activity regulation">
    <text evidence="1">Allosterically activated by fructose 1,6-bisphosphate (FBP).</text>
</comment>
<comment type="pathway">
    <text evidence="1">Fermentation; pyruvate fermentation to lactate; (S)-lactate from pyruvate: step 1/1.</text>
</comment>
<comment type="subunit">
    <text evidence="1">Homotetramer.</text>
</comment>
<comment type="subcellular location">
    <subcellularLocation>
        <location evidence="1">Cytoplasm</location>
    </subcellularLocation>
</comment>
<comment type="similarity">
    <text evidence="1">Belongs to the LDH/MDH superfamily. LDH family.</text>
</comment>
<accession>A4W1K6</accession>
<reference key="1">
    <citation type="journal article" date="2007" name="PLoS ONE">
        <title>A glimpse of streptococcal toxic shock syndrome from comparative genomics of S. suis 2 Chinese isolates.</title>
        <authorList>
            <person name="Chen C."/>
            <person name="Tang J."/>
            <person name="Dong W."/>
            <person name="Wang C."/>
            <person name="Feng Y."/>
            <person name="Wang J."/>
            <person name="Zheng F."/>
            <person name="Pan X."/>
            <person name="Liu D."/>
            <person name="Li M."/>
            <person name="Song Y."/>
            <person name="Zhu X."/>
            <person name="Sun H."/>
            <person name="Feng T."/>
            <person name="Guo Z."/>
            <person name="Ju A."/>
            <person name="Ge J."/>
            <person name="Dong Y."/>
            <person name="Sun W."/>
            <person name="Jiang Y."/>
            <person name="Wang J."/>
            <person name="Yan J."/>
            <person name="Yang H."/>
            <person name="Wang X."/>
            <person name="Gao G.F."/>
            <person name="Yang R."/>
            <person name="Wang J."/>
            <person name="Yu J."/>
        </authorList>
    </citation>
    <scope>NUCLEOTIDE SEQUENCE [LARGE SCALE GENOMIC DNA]</scope>
    <source>
        <strain>98HAH33</strain>
    </source>
</reference>
<dbReference type="EC" id="1.1.1.27" evidence="1"/>
<dbReference type="EMBL" id="CP000408">
    <property type="protein sequence ID" value="ABP92245.1"/>
    <property type="molecule type" value="Genomic_DNA"/>
</dbReference>
<dbReference type="SMR" id="A4W1K6"/>
<dbReference type="KEGG" id="ssv:SSU98_1087"/>
<dbReference type="HOGENOM" id="CLU_045401_1_1_9"/>
<dbReference type="UniPathway" id="UPA00554">
    <property type="reaction ID" value="UER00611"/>
</dbReference>
<dbReference type="GO" id="GO:0005737">
    <property type="term" value="C:cytoplasm"/>
    <property type="evidence" value="ECO:0007669"/>
    <property type="project" value="UniProtKB-SubCell"/>
</dbReference>
<dbReference type="GO" id="GO:0004459">
    <property type="term" value="F:L-lactate dehydrogenase activity"/>
    <property type="evidence" value="ECO:0007669"/>
    <property type="project" value="UniProtKB-UniRule"/>
</dbReference>
<dbReference type="GO" id="GO:0006096">
    <property type="term" value="P:glycolytic process"/>
    <property type="evidence" value="ECO:0007669"/>
    <property type="project" value="UniProtKB-UniRule"/>
</dbReference>
<dbReference type="GO" id="GO:0006089">
    <property type="term" value="P:lactate metabolic process"/>
    <property type="evidence" value="ECO:0007669"/>
    <property type="project" value="TreeGrafter"/>
</dbReference>
<dbReference type="CDD" id="cd05291">
    <property type="entry name" value="HicDH_like"/>
    <property type="match status" value="1"/>
</dbReference>
<dbReference type="FunFam" id="3.40.50.720:FF:000018">
    <property type="entry name" value="Malate dehydrogenase"/>
    <property type="match status" value="1"/>
</dbReference>
<dbReference type="Gene3D" id="3.90.110.10">
    <property type="entry name" value="Lactate dehydrogenase/glycoside hydrolase, family 4, C-terminal"/>
    <property type="match status" value="1"/>
</dbReference>
<dbReference type="Gene3D" id="3.40.50.720">
    <property type="entry name" value="NAD(P)-binding Rossmann-like Domain"/>
    <property type="match status" value="1"/>
</dbReference>
<dbReference type="HAMAP" id="MF_00488">
    <property type="entry name" value="Lactate_dehydrog"/>
    <property type="match status" value="1"/>
</dbReference>
<dbReference type="InterPro" id="IPR001557">
    <property type="entry name" value="L-lactate/malate_DH"/>
</dbReference>
<dbReference type="InterPro" id="IPR011304">
    <property type="entry name" value="L-lactate_DH"/>
</dbReference>
<dbReference type="InterPro" id="IPR018177">
    <property type="entry name" value="L-lactate_DH_AS"/>
</dbReference>
<dbReference type="InterPro" id="IPR022383">
    <property type="entry name" value="Lactate/malate_DH_C"/>
</dbReference>
<dbReference type="InterPro" id="IPR001236">
    <property type="entry name" value="Lactate/malate_DH_N"/>
</dbReference>
<dbReference type="InterPro" id="IPR015955">
    <property type="entry name" value="Lactate_DH/Glyco_Ohase_4_C"/>
</dbReference>
<dbReference type="InterPro" id="IPR036291">
    <property type="entry name" value="NAD(P)-bd_dom_sf"/>
</dbReference>
<dbReference type="NCBIfam" id="TIGR01771">
    <property type="entry name" value="L-LDH-NAD"/>
    <property type="match status" value="1"/>
</dbReference>
<dbReference type="NCBIfam" id="NF000824">
    <property type="entry name" value="PRK00066.1"/>
    <property type="match status" value="1"/>
</dbReference>
<dbReference type="PANTHER" id="PTHR43128">
    <property type="entry name" value="L-2-HYDROXYCARBOXYLATE DEHYDROGENASE (NAD(P)(+))"/>
    <property type="match status" value="1"/>
</dbReference>
<dbReference type="PANTHER" id="PTHR43128:SF16">
    <property type="entry name" value="L-LACTATE DEHYDROGENASE"/>
    <property type="match status" value="1"/>
</dbReference>
<dbReference type="Pfam" id="PF02866">
    <property type="entry name" value="Ldh_1_C"/>
    <property type="match status" value="1"/>
</dbReference>
<dbReference type="Pfam" id="PF00056">
    <property type="entry name" value="Ldh_1_N"/>
    <property type="match status" value="1"/>
</dbReference>
<dbReference type="PIRSF" id="PIRSF000102">
    <property type="entry name" value="Lac_mal_DH"/>
    <property type="match status" value="1"/>
</dbReference>
<dbReference type="PRINTS" id="PR00086">
    <property type="entry name" value="LLDHDRGNASE"/>
</dbReference>
<dbReference type="SUPFAM" id="SSF56327">
    <property type="entry name" value="LDH C-terminal domain-like"/>
    <property type="match status" value="1"/>
</dbReference>
<dbReference type="SUPFAM" id="SSF51735">
    <property type="entry name" value="NAD(P)-binding Rossmann-fold domains"/>
    <property type="match status" value="1"/>
</dbReference>
<dbReference type="PROSITE" id="PS00064">
    <property type="entry name" value="L_LDH"/>
    <property type="match status" value="1"/>
</dbReference>
<protein>
    <recommendedName>
        <fullName evidence="1">L-lactate dehydrogenase</fullName>
        <shortName evidence="1">L-LDH</shortName>
        <ecNumber evidence="1">1.1.1.27</ecNumber>
    </recommendedName>
</protein>
<organism>
    <name type="scientific">Streptococcus suis (strain 98HAH33)</name>
    <dbReference type="NCBI Taxonomy" id="391296"/>
    <lineage>
        <taxon>Bacteria</taxon>
        <taxon>Bacillati</taxon>
        <taxon>Bacillota</taxon>
        <taxon>Bacilli</taxon>
        <taxon>Lactobacillales</taxon>
        <taxon>Streptococcaceae</taxon>
        <taxon>Streptococcus</taxon>
    </lineage>
</organism>
<keyword id="KW-0021">Allosteric enzyme</keyword>
<keyword id="KW-0963">Cytoplasm</keyword>
<keyword id="KW-0520">NAD</keyword>
<keyword id="KW-0560">Oxidoreductase</keyword>
<keyword id="KW-0597">Phosphoprotein</keyword>
<sequence length="327" mass="35422">MTATKQHKKVILVGDGAVGSAYAYALVNQGIGQELGIIDINKDRTQGDAEDLSHALAFTFPKKIYSAEYSDAHDADLVVLTAGLPQKPGETRLELVEKNLRINQQIVTEIVNSGFNGIFLVAANPVDVLTYSTWKFSGFPKERVIGSGTSLDSARFRQALAEKIGIDARSVHAYIMGEHGDSEFAVWSHANVAGVKLYDWLQDNRDIDEQGLVDLFVSVRDAAYSIINKKGATYYGIGVALARITKAIFDDENAVLPLSVYQAGQYEGVEDVFIGQPAIIGAHGIVRPVNIPLSDAELQKMQASAKQLKDIIDDAFANPEIAAGVKN</sequence>
<gene>
    <name evidence="1" type="primary">ldh</name>
    <name type="ordered locus">SSU98_1087</name>
</gene>
<name>LDH_STRS2</name>
<proteinExistence type="inferred from homology"/>
<feature type="chain" id="PRO_1000026514" description="L-lactate dehydrogenase">
    <location>
        <begin position="1"/>
        <end position="327"/>
    </location>
</feature>
<feature type="active site" description="Proton acceptor" evidence="1">
    <location>
        <position position="179"/>
    </location>
</feature>
<feature type="binding site" evidence="1">
    <location>
        <position position="18"/>
    </location>
    <ligand>
        <name>NAD(+)</name>
        <dbReference type="ChEBI" id="CHEBI:57540"/>
    </ligand>
</feature>
<feature type="binding site" evidence="1">
    <location>
        <position position="39"/>
    </location>
    <ligand>
        <name>NAD(+)</name>
        <dbReference type="ChEBI" id="CHEBI:57540"/>
    </ligand>
</feature>
<feature type="binding site" evidence="1">
    <location>
        <position position="44"/>
    </location>
    <ligand>
        <name>NAD(+)</name>
        <dbReference type="ChEBI" id="CHEBI:57540"/>
    </ligand>
</feature>
<feature type="binding site" evidence="1">
    <location>
        <position position="69"/>
    </location>
    <ligand>
        <name>NAD(+)</name>
        <dbReference type="ChEBI" id="CHEBI:57540"/>
    </ligand>
</feature>
<feature type="binding site" evidence="1">
    <location>
        <begin position="83"/>
        <end position="84"/>
    </location>
    <ligand>
        <name>NAD(+)</name>
        <dbReference type="ChEBI" id="CHEBI:57540"/>
    </ligand>
</feature>
<feature type="binding site" evidence="1">
    <location>
        <position position="86"/>
    </location>
    <ligand>
        <name>substrate</name>
    </ligand>
</feature>
<feature type="binding site" evidence="1">
    <location>
        <position position="92"/>
    </location>
    <ligand>
        <name>substrate</name>
    </ligand>
</feature>
<feature type="binding site" evidence="1">
    <location>
        <begin position="122"/>
        <end position="124"/>
    </location>
    <ligand>
        <name>NAD(+)</name>
        <dbReference type="ChEBI" id="CHEBI:57540"/>
    </ligand>
</feature>
<feature type="binding site" evidence="1">
    <location>
        <begin position="124"/>
        <end position="127"/>
    </location>
    <ligand>
        <name>substrate</name>
    </ligand>
</feature>
<feature type="binding site" evidence="1">
    <location>
        <position position="147"/>
    </location>
    <ligand>
        <name>NAD(+)</name>
        <dbReference type="ChEBI" id="CHEBI:57540"/>
    </ligand>
</feature>
<feature type="binding site" evidence="1">
    <location>
        <begin position="152"/>
        <end position="155"/>
    </location>
    <ligand>
        <name>substrate</name>
    </ligand>
</feature>
<feature type="binding site" evidence="1">
    <location>
        <position position="157"/>
    </location>
    <ligand>
        <name>beta-D-fructose 1,6-bisphosphate</name>
        <dbReference type="ChEBI" id="CHEBI:32966"/>
        <note>allosteric activator</note>
    </ligand>
</feature>
<feature type="binding site" evidence="1">
    <location>
        <position position="172"/>
    </location>
    <ligand>
        <name>beta-D-fructose 1,6-bisphosphate</name>
        <dbReference type="ChEBI" id="CHEBI:32966"/>
        <note>allosteric activator</note>
    </ligand>
</feature>
<feature type="binding site" evidence="1">
    <location>
        <position position="233"/>
    </location>
    <ligand>
        <name>substrate</name>
    </ligand>
</feature>
<feature type="modified residue" description="Phosphotyrosine" evidence="1">
    <location>
        <position position="224"/>
    </location>
</feature>
<evidence type="ECO:0000255" key="1">
    <source>
        <dbReference type="HAMAP-Rule" id="MF_00488"/>
    </source>
</evidence>